<organism>
    <name type="scientific">Trieres chinensis</name>
    <name type="common">Marine centric diatom</name>
    <name type="synonym">Odontella sinensis</name>
    <dbReference type="NCBI Taxonomy" id="1514140"/>
    <lineage>
        <taxon>Eukaryota</taxon>
        <taxon>Sar</taxon>
        <taxon>Stramenopiles</taxon>
        <taxon>Ochrophyta</taxon>
        <taxon>Bacillariophyta</taxon>
        <taxon>Mediophyceae</taxon>
        <taxon>Biddulphiophycidae</taxon>
        <taxon>Eupodiscales</taxon>
        <taxon>Parodontellaceae</taxon>
        <taxon>Trieres</taxon>
    </lineage>
</organism>
<protein>
    <recommendedName>
        <fullName evidence="2">Large ribosomal subunit protein uL23c</fullName>
    </recommendedName>
    <alternativeName>
        <fullName>50S ribosomal protein L23, chloroplastic</fullName>
    </alternativeName>
</protein>
<accession>P49559</accession>
<feature type="chain" id="PRO_0000129457" description="Large ribosomal subunit protein uL23c">
    <location>
        <begin position="1"/>
        <end position="102"/>
    </location>
</feature>
<geneLocation type="chloroplast"/>
<proteinExistence type="inferred from homology"/>
<keyword id="KW-0150">Chloroplast</keyword>
<keyword id="KW-0934">Plastid</keyword>
<keyword id="KW-0687">Ribonucleoprotein</keyword>
<keyword id="KW-0689">Ribosomal protein</keyword>
<keyword id="KW-0694">RNA-binding</keyword>
<keyword id="KW-0699">rRNA-binding</keyword>
<evidence type="ECO:0000250" key="1"/>
<evidence type="ECO:0000305" key="2"/>
<reference key="1">
    <citation type="journal article" date="1995" name="Plant Mol. Biol. Rep.">
        <title>The chloroplast genome of a chlorophyll a+c-containing alga, Odontella sinensis.</title>
        <authorList>
            <person name="Kowallik K.V."/>
            <person name="Stoebe B."/>
            <person name="Schaffran I."/>
            <person name="Kroth-Pancic P."/>
            <person name="Freier U."/>
        </authorList>
    </citation>
    <scope>NUCLEOTIDE SEQUENCE [LARGE SCALE GENOMIC DNA]</scope>
</reference>
<sequence length="102" mass="11846">MVDSSYFNRSSTNIIKYPIITDKATRLLENNQYSFIVNPYSDKITIKAAIEYLFNVKVIKVNTCHLPKKKKRVGKYLGWKSHYKKAIVTLSQGDRINLFAEN</sequence>
<dbReference type="EMBL" id="Z67753">
    <property type="protein sequence ID" value="CAA91647.2"/>
    <property type="molecule type" value="Genomic_DNA"/>
</dbReference>
<dbReference type="PIR" id="S78274">
    <property type="entry name" value="S78274"/>
</dbReference>
<dbReference type="SMR" id="P49559"/>
<dbReference type="GO" id="GO:0009507">
    <property type="term" value="C:chloroplast"/>
    <property type="evidence" value="ECO:0007669"/>
    <property type="project" value="UniProtKB-SubCell"/>
</dbReference>
<dbReference type="GO" id="GO:1990904">
    <property type="term" value="C:ribonucleoprotein complex"/>
    <property type="evidence" value="ECO:0007669"/>
    <property type="project" value="UniProtKB-KW"/>
</dbReference>
<dbReference type="GO" id="GO:0005840">
    <property type="term" value="C:ribosome"/>
    <property type="evidence" value="ECO:0007669"/>
    <property type="project" value="UniProtKB-KW"/>
</dbReference>
<dbReference type="GO" id="GO:0019843">
    <property type="term" value="F:rRNA binding"/>
    <property type="evidence" value="ECO:0007669"/>
    <property type="project" value="UniProtKB-UniRule"/>
</dbReference>
<dbReference type="GO" id="GO:0003735">
    <property type="term" value="F:structural constituent of ribosome"/>
    <property type="evidence" value="ECO:0007669"/>
    <property type="project" value="InterPro"/>
</dbReference>
<dbReference type="GO" id="GO:0006412">
    <property type="term" value="P:translation"/>
    <property type="evidence" value="ECO:0007669"/>
    <property type="project" value="UniProtKB-UniRule"/>
</dbReference>
<dbReference type="FunFam" id="3.30.70.330:FF:000001">
    <property type="entry name" value="50S ribosomal protein L23"/>
    <property type="match status" value="1"/>
</dbReference>
<dbReference type="Gene3D" id="3.30.70.330">
    <property type="match status" value="1"/>
</dbReference>
<dbReference type="HAMAP" id="MF_01369_B">
    <property type="entry name" value="Ribosomal_uL23_B"/>
    <property type="match status" value="1"/>
</dbReference>
<dbReference type="InterPro" id="IPR012677">
    <property type="entry name" value="Nucleotide-bd_a/b_plait_sf"/>
</dbReference>
<dbReference type="InterPro" id="IPR013025">
    <property type="entry name" value="Ribosomal_uL23-like"/>
</dbReference>
<dbReference type="InterPro" id="IPR012678">
    <property type="entry name" value="Ribosomal_uL23/eL15/eS24_sf"/>
</dbReference>
<dbReference type="InterPro" id="IPR001014">
    <property type="entry name" value="Ribosomal_uL23_CS"/>
</dbReference>
<dbReference type="NCBIfam" id="NF004363">
    <property type="entry name" value="PRK05738.2-4"/>
    <property type="match status" value="1"/>
</dbReference>
<dbReference type="NCBIfam" id="NF004368">
    <property type="entry name" value="PRK05738.3-4"/>
    <property type="match status" value="1"/>
</dbReference>
<dbReference type="PANTHER" id="PTHR11620">
    <property type="entry name" value="60S RIBOSOMAL PROTEIN L23A"/>
    <property type="match status" value="1"/>
</dbReference>
<dbReference type="Pfam" id="PF00276">
    <property type="entry name" value="Ribosomal_L23"/>
    <property type="match status" value="1"/>
</dbReference>
<dbReference type="SUPFAM" id="SSF54189">
    <property type="entry name" value="Ribosomal proteins S24e, L23 and L15e"/>
    <property type="match status" value="1"/>
</dbReference>
<dbReference type="PROSITE" id="PS00050">
    <property type="entry name" value="RIBOSOMAL_L23"/>
    <property type="match status" value="1"/>
</dbReference>
<name>RK23_TRICV</name>
<comment type="function">
    <text evidence="1">Binds to 23S rRNA.</text>
</comment>
<comment type="subunit">
    <text evidence="1">Part of the 50S ribosomal subunit.</text>
</comment>
<comment type="subcellular location">
    <subcellularLocation>
        <location>Plastid</location>
        <location>Chloroplast</location>
    </subcellularLocation>
</comment>
<comment type="similarity">
    <text evidence="2">Belongs to the universal ribosomal protein uL23 family.</text>
</comment>
<gene>
    <name type="primary">rpl23</name>
</gene>